<proteinExistence type="inferred from homology"/>
<dbReference type="EC" id="1.3.1.98" evidence="1"/>
<dbReference type="EMBL" id="CP000270">
    <property type="protein sequence ID" value="ABE32179.1"/>
    <property type="molecule type" value="Genomic_DNA"/>
</dbReference>
<dbReference type="RefSeq" id="WP_011489677.1">
    <property type="nucleotide sequence ID" value="NC_007951.1"/>
</dbReference>
<dbReference type="SMR" id="Q13UR0"/>
<dbReference type="STRING" id="266265.Bxe_A0755"/>
<dbReference type="KEGG" id="bxb:DR64_2923"/>
<dbReference type="KEGG" id="bxe:Bxe_A0755"/>
<dbReference type="PATRIC" id="fig|266265.5.peg.3837"/>
<dbReference type="eggNOG" id="COG0812">
    <property type="taxonomic scope" value="Bacteria"/>
</dbReference>
<dbReference type="OrthoDB" id="9804753at2"/>
<dbReference type="UniPathway" id="UPA00219"/>
<dbReference type="Proteomes" id="UP000001817">
    <property type="component" value="Chromosome 1"/>
</dbReference>
<dbReference type="GO" id="GO:0005829">
    <property type="term" value="C:cytosol"/>
    <property type="evidence" value="ECO:0007669"/>
    <property type="project" value="TreeGrafter"/>
</dbReference>
<dbReference type="GO" id="GO:0071949">
    <property type="term" value="F:FAD binding"/>
    <property type="evidence" value="ECO:0007669"/>
    <property type="project" value="InterPro"/>
</dbReference>
<dbReference type="GO" id="GO:0008762">
    <property type="term" value="F:UDP-N-acetylmuramate dehydrogenase activity"/>
    <property type="evidence" value="ECO:0007669"/>
    <property type="project" value="UniProtKB-UniRule"/>
</dbReference>
<dbReference type="GO" id="GO:0051301">
    <property type="term" value="P:cell division"/>
    <property type="evidence" value="ECO:0007669"/>
    <property type="project" value="UniProtKB-KW"/>
</dbReference>
<dbReference type="GO" id="GO:0071555">
    <property type="term" value="P:cell wall organization"/>
    <property type="evidence" value="ECO:0007669"/>
    <property type="project" value="UniProtKB-KW"/>
</dbReference>
<dbReference type="GO" id="GO:0009252">
    <property type="term" value="P:peptidoglycan biosynthetic process"/>
    <property type="evidence" value="ECO:0007669"/>
    <property type="project" value="UniProtKB-UniRule"/>
</dbReference>
<dbReference type="GO" id="GO:0008360">
    <property type="term" value="P:regulation of cell shape"/>
    <property type="evidence" value="ECO:0007669"/>
    <property type="project" value="UniProtKB-KW"/>
</dbReference>
<dbReference type="Gene3D" id="3.30.465.10">
    <property type="match status" value="1"/>
</dbReference>
<dbReference type="Gene3D" id="3.90.78.10">
    <property type="entry name" value="UDP-N-acetylenolpyruvoylglucosamine reductase, C-terminal domain"/>
    <property type="match status" value="1"/>
</dbReference>
<dbReference type="Gene3D" id="3.30.43.10">
    <property type="entry name" value="Uridine Diphospho-n-acetylenolpyruvylglucosamine Reductase, domain 2"/>
    <property type="match status" value="1"/>
</dbReference>
<dbReference type="HAMAP" id="MF_00037">
    <property type="entry name" value="MurB"/>
    <property type="match status" value="1"/>
</dbReference>
<dbReference type="InterPro" id="IPR016166">
    <property type="entry name" value="FAD-bd_PCMH"/>
</dbReference>
<dbReference type="InterPro" id="IPR036318">
    <property type="entry name" value="FAD-bd_PCMH-like_sf"/>
</dbReference>
<dbReference type="InterPro" id="IPR016167">
    <property type="entry name" value="FAD-bd_PCMH_sub1"/>
</dbReference>
<dbReference type="InterPro" id="IPR016169">
    <property type="entry name" value="FAD-bd_PCMH_sub2"/>
</dbReference>
<dbReference type="InterPro" id="IPR003170">
    <property type="entry name" value="MurB"/>
</dbReference>
<dbReference type="InterPro" id="IPR011601">
    <property type="entry name" value="MurB_C"/>
</dbReference>
<dbReference type="InterPro" id="IPR036635">
    <property type="entry name" value="MurB_C_sf"/>
</dbReference>
<dbReference type="InterPro" id="IPR006094">
    <property type="entry name" value="Oxid_FAD_bind_N"/>
</dbReference>
<dbReference type="NCBIfam" id="TIGR00179">
    <property type="entry name" value="murB"/>
    <property type="match status" value="1"/>
</dbReference>
<dbReference type="NCBIfam" id="NF000755">
    <property type="entry name" value="PRK00046.1"/>
    <property type="match status" value="1"/>
</dbReference>
<dbReference type="NCBIfam" id="NF010478">
    <property type="entry name" value="PRK13903.1"/>
    <property type="match status" value="1"/>
</dbReference>
<dbReference type="PANTHER" id="PTHR21071">
    <property type="entry name" value="UDP-N-ACETYLENOLPYRUVOYLGLUCOSAMINE REDUCTASE"/>
    <property type="match status" value="1"/>
</dbReference>
<dbReference type="PANTHER" id="PTHR21071:SF4">
    <property type="entry name" value="UDP-N-ACETYLENOLPYRUVOYLGLUCOSAMINE REDUCTASE"/>
    <property type="match status" value="1"/>
</dbReference>
<dbReference type="Pfam" id="PF01565">
    <property type="entry name" value="FAD_binding_4"/>
    <property type="match status" value="1"/>
</dbReference>
<dbReference type="Pfam" id="PF02873">
    <property type="entry name" value="MurB_C"/>
    <property type="match status" value="1"/>
</dbReference>
<dbReference type="SUPFAM" id="SSF56176">
    <property type="entry name" value="FAD-binding/transporter-associated domain-like"/>
    <property type="match status" value="1"/>
</dbReference>
<dbReference type="SUPFAM" id="SSF56194">
    <property type="entry name" value="Uridine diphospho-N-Acetylenolpyruvylglucosamine reductase, MurB, C-terminal domain"/>
    <property type="match status" value="1"/>
</dbReference>
<dbReference type="PROSITE" id="PS51387">
    <property type="entry name" value="FAD_PCMH"/>
    <property type="match status" value="1"/>
</dbReference>
<accession>Q13UR0</accession>
<keyword id="KW-0131">Cell cycle</keyword>
<keyword id="KW-0132">Cell division</keyword>
<keyword id="KW-0133">Cell shape</keyword>
<keyword id="KW-0961">Cell wall biogenesis/degradation</keyword>
<keyword id="KW-0963">Cytoplasm</keyword>
<keyword id="KW-0274">FAD</keyword>
<keyword id="KW-0285">Flavoprotein</keyword>
<keyword id="KW-0521">NADP</keyword>
<keyword id="KW-0560">Oxidoreductase</keyword>
<keyword id="KW-0573">Peptidoglycan synthesis</keyword>
<keyword id="KW-1185">Reference proteome</keyword>
<evidence type="ECO:0000255" key="1">
    <source>
        <dbReference type="HAMAP-Rule" id="MF_00037"/>
    </source>
</evidence>
<organism>
    <name type="scientific">Paraburkholderia xenovorans (strain LB400)</name>
    <dbReference type="NCBI Taxonomy" id="266265"/>
    <lineage>
        <taxon>Bacteria</taxon>
        <taxon>Pseudomonadati</taxon>
        <taxon>Pseudomonadota</taxon>
        <taxon>Betaproteobacteria</taxon>
        <taxon>Burkholderiales</taxon>
        <taxon>Burkholderiaceae</taxon>
        <taxon>Paraburkholderia</taxon>
    </lineage>
</organism>
<sequence>MSQTESAAFLAGYPLKAHNTFGFDVRARFACRIEQEAQLMPAVRDPRAAGLPRLVLGGGSNVVLTGDFGGLVLLVALRGRRVVREDNDAWYVEAAGGEPWHEFVGWTLSQGMAGLENLALIPGTVGAAPIQNIGAYGLEMCERFASLRAVELTTGAVVELDAQACRFGYRDSFFKREGRDRFVITSVTFRLPKVWQPRAGYADLARELAANGHAGTPPTAQAIFDAVVAVRRAKLPDPLELGNAGSFFKNPVIGPAQFEALKLREPDVVSYVQADGRVKLAAGWLIDRCGWKGRAMGAAAVHERQALVLVNRGGASGAEVLALAKAIQRDVRERFGVELEPEPVCL</sequence>
<comment type="function">
    <text evidence="1">Cell wall formation.</text>
</comment>
<comment type="catalytic activity">
    <reaction evidence="1">
        <text>UDP-N-acetyl-alpha-D-muramate + NADP(+) = UDP-N-acetyl-3-O-(1-carboxyvinyl)-alpha-D-glucosamine + NADPH + H(+)</text>
        <dbReference type="Rhea" id="RHEA:12248"/>
        <dbReference type="ChEBI" id="CHEBI:15378"/>
        <dbReference type="ChEBI" id="CHEBI:57783"/>
        <dbReference type="ChEBI" id="CHEBI:58349"/>
        <dbReference type="ChEBI" id="CHEBI:68483"/>
        <dbReference type="ChEBI" id="CHEBI:70757"/>
        <dbReference type="EC" id="1.3.1.98"/>
    </reaction>
</comment>
<comment type="cofactor">
    <cofactor evidence="1">
        <name>FAD</name>
        <dbReference type="ChEBI" id="CHEBI:57692"/>
    </cofactor>
</comment>
<comment type="pathway">
    <text evidence="1">Cell wall biogenesis; peptidoglycan biosynthesis.</text>
</comment>
<comment type="subcellular location">
    <subcellularLocation>
        <location evidence="1">Cytoplasm</location>
    </subcellularLocation>
</comment>
<comment type="similarity">
    <text evidence="1">Belongs to the MurB family.</text>
</comment>
<reference key="1">
    <citation type="journal article" date="2006" name="Proc. Natl. Acad. Sci. U.S.A.">
        <title>Burkholderia xenovorans LB400 harbors a multi-replicon, 9.73-Mbp genome shaped for versatility.</title>
        <authorList>
            <person name="Chain P.S.G."/>
            <person name="Denef V.J."/>
            <person name="Konstantinidis K.T."/>
            <person name="Vergez L.M."/>
            <person name="Agullo L."/>
            <person name="Reyes V.L."/>
            <person name="Hauser L."/>
            <person name="Cordova M."/>
            <person name="Gomez L."/>
            <person name="Gonzalez M."/>
            <person name="Land M."/>
            <person name="Lao V."/>
            <person name="Larimer F."/>
            <person name="LiPuma J.J."/>
            <person name="Mahenthiralingam E."/>
            <person name="Malfatti S.A."/>
            <person name="Marx C.J."/>
            <person name="Parnell J.J."/>
            <person name="Ramette A."/>
            <person name="Richardson P."/>
            <person name="Seeger M."/>
            <person name="Smith D."/>
            <person name="Spilker T."/>
            <person name="Sul W.J."/>
            <person name="Tsoi T.V."/>
            <person name="Ulrich L.E."/>
            <person name="Zhulin I.B."/>
            <person name="Tiedje J.M."/>
        </authorList>
    </citation>
    <scope>NUCLEOTIDE SEQUENCE [LARGE SCALE GENOMIC DNA]</scope>
    <source>
        <strain>LB400</strain>
    </source>
</reference>
<feature type="chain" id="PRO_0000332451" description="UDP-N-acetylenolpyruvoylglucosamine reductase">
    <location>
        <begin position="1"/>
        <end position="346"/>
    </location>
</feature>
<feature type="domain" description="FAD-binding PCMH-type" evidence="1">
    <location>
        <begin position="22"/>
        <end position="194"/>
    </location>
</feature>
<feature type="active site" evidence="1">
    <location>
        <position position="170"/>
    </location>
</feature>
<feature type="active site" description="Proton donor" evidence="1">
    <location>
        <position position="246"/>
    </location>
</feature>
<feature type="active site" evidence="1">
    <location>
        <position position="342"/>
    </location>
</feature>
<name>MURB_PARXL</name>
<protein>
    <recommendedName>
        <fullName evidence="1">UDP-N-acetylenolpyruvoylglucosamine reductase</fullName>
        <ecNumber evidence="1">1.3.1.98</ecNumber>
    </recommendedName>
    <alternativeName>
        <fullName evidence="1">UDP-N-acetylmuramate dehydrogenase</fullName>
    </alternativeName>
</protein>
<gene>
    <name evidence="1" type="primary">murB</name>
    <name type="ordered locus">Bxeno_A3641</name>
    <name type="ORF">Bxe_A0755</name>
</gene>